<name>RL23_THET2</name>
<comment type="function">
    <text evidence="1">One of the early assembly proteins it binds 23S rRNA. One of the proteins that surrounds the polypeptide exit tunnel on the outside of the ribosome. Forms the main docking site for trigger factor binding to the ribosome.</text>
</comment>
<comment type="subunit">
    <text evidence="1">Part of the 50S ribosomal subunit. Contacts protein L29, and trigger factor when it is bound to the ribosome.</text>
</comment>
<comment type="similarity">
    <text evidence="1">Belongs to the universal ribosomal protein uL23 family.</text>
</comment>
<organism>
    <name type="scientific">Thermus thermophilus (strain ATCC BAA-163 / DSM 7039 / HB27)</name>
    <dbReference type="NCBI Taxonomy" id="262724"/>
    <lineage>
        <taxon>Bacteria</taxon>
        <taxon>Thermotogati</taxon>
        <taxon>Deinococcota</taxon>
        <taxon>Deinococci</taxon>
        <taxon>Thermales</taxon>
        <taxon>Thermaceae</taxon>
        <taxon>Thermus</taxon>
    </lineage>
</organism>
<proteinExistence type="evidence at protein level"/>
<accession>Q72I06</accession>
<sequence length="96" mass="10737">MKTAYDVILAPVLSEKAYAGFAEGKYTFWVHPKATKTEIKNAVETAFKVKVVKVNTLHVRGKKKRLGRYLGKRPDRKKAIVQVAPGQKIEALEGLI</sequence>
<reference key="1">
    <citation type="journal article" date="2004" name="Nat. Biotechnol.">
        <title>The genome sequence of the extreme thermophile Thermus thermophilus.</title>
        <authorList>
            <person name="Henne A."/>
            <person name="Brueggemann H."/>
            <person name="Raasch C."/>
            <person name="Wiezer A."/>
            <person name="Hartsch T."/>
            <person name="Liesegang H."/>
            <person name="Johann A."/>
            <person name="Lienard T."/>
            <person name="Gohl O."/>
            <person name="Martinez-Arias R."/>
            <person name="Jacobi C."/>
            <person name="Starkuviene V."/>
            <person name="Schlenczeck S."/>
            <person name="Dencker S."/>
            <person name="Huber R."/>
            <person name="Klenk H.-P."/>
            <person name="Kramer W."/>
            <person name="Merkl R."/>
            <person name="Gottschalk G."/>
            <person name="Fritz H.-J."/>
        </authorList>
    </citation>
    <scope>NUCLEOTIDE SEQUENCE [LARGE SCALE GENOMIC DNA]</scope>
    <source>
        <strain>ATCC BAA-163 / DSM 7039 / HB27</strain>
    </source>
</reference>
<gene>
    <name evidence="1" type="primary">rplW</name>
    <name type="ordered locus">TT_C1326</name>
</gene>
<feature type="chain" id="PRO_1000068182" description="Large ribosomal subunit protein uL23">
    <location>
        <begin position="1"/>
        <end position="96"/>
    </location>
</feature>
<feature type="strand" evidence="3">
    <location>
        <begin position="7"/>
        <end position="11"/>
    </location>
</feature>
<feature type="helix" evidence="3">
    <location>
        <begin position="15"/>
        <end position="19"/>
    </location>
</feature>
<feature type="turn" evidence="3">
    <location>
        <begin position="20"/>
        <end position="24"/>
    </location>
</feature>
<feature type="strand" evidence="3">
    <location>
        <begin position="25"/>
        <end position="30"/>
    </location>
</feature>
<feature type="helix" evidence="3">
    <location>
        <begin position="36"/>
        <end position="47"/>
    </location>
</feature>
<feature type="strand" evidence="3">
    <location>
        <begin position="51"/>
        <end position="59"/>
    </location>
</feature>
<feature type="strand" evidence="4">
    <location>
        <begin position="66"/>
        <end position="68"/>
    </location>
</feature>
<feature type="strand" evidence="3">
    <location>
        <begin position="76"/>
        <end position="83"/>
    </location>
</feature>
<feature type="helix" evidence="3">
    <location>
        <begin position="90"/>
        <end position="93"/>
    </location>
</feature>
<protein>
    <recommendedName>
        <fullName evidence="1">Large ribosomal subunit protein uL23</fullName>
    </recommendedName>
    <alternativeName>
        <fullName evidence="2">50S ribosomal protein L23</fullName>
    </alternativeName>
</protein>
<dbReference type="EMBL" id="AE017221">
    <property type="protein sequence ID" value="AAS81668.1"/>
    <property type="molecule type" value="Genomic_DNA"/>
</dbReference>
<dbReference type="RefSeq" id="WP_008633421.1">
    <property type="nucleotide sequence ID" value="NC_005835.1"/>
</dbReference>
<dbReference type="PDB" id="4V4I">
    <property type="method" value="X-ray"/>
    <property type="resolution" value="3.71 A"/>
    <property type="chains" value="R=1-96"/>
</dbReference>
<dbReference type="PDB" id="4V4J">
    <property type="method" value="X-ray"/>
    <property type="resolution" value="3.83 A"/>
    <property type="chains" value="R=1-96"/>
</dbReference>
<dbReference type="PDB" id="4V63">
    <property type="method" value="X-ray"/>
    <property type="resolution" value="3.21 A"/>
    <property type="chains" value="BX/DX=1-96"/>
</dbReference>
<dbReference type="PDB" id="4V67">
    <property type="method" value="X-ray"/>
    <property type="resolution" value="3.00 A"/>
    <property type="chains" value="BX/DX=1-96"/>
</dbReference>
<dbReference type="PDB" id="4V7P">
    <property type="method" value="X-ray"/>
    <property type="resolution" value="3.62 A"/>
    <property type="chains" value="BT/CT=1-96"/>
</dbReference>
<dbReference type="PDB" id="4V83">
    <property type="method" value="X-ray"/>
    <property type="resolution" value="3.50 A"/>
    <property type="chains" value="BT/DT=3-94"/>
</dbReference>
<dbReference type="PDB" id="4V84">
    <property type="method" value="X-ray"/>
    <property type="resolution" value="3.40 A"/>
    <property type="chains" value="BT/DT=3-94"/>
</dbReference>
<dbReference type="PDB" id="4V9J">
    <property type="method" value="X-ray"/>
    <property type="resolution" value="3.86 A"/>
    <property type="chains" value="BX/DX=3-95"/>
</dbReference>
<dbReference type="PDB" id="4V9K">
    <property type="method" value="X-ray"/>
    <property type="resolution" value="3.50 A"/>
    <property type="chains" value="BX/DX=3-95"/>
</dbReference>
<dbReference type="PDB" id="4V9L">
    <property type="method" value="X-ray"/>
    <property type="resolution" value="3.50 A"/>
    <property type="chains" value="BX/DX=3-95"/>
</dbReference>
<dbReference type="PDB" id="4V9M">
    <property type="method" value="X-ray"/>
    <property type="resolution" value="4.00 A"/>
    <property type="chains" value="BX/DX=3-95"/>
</dbReference>
<dbReference type="PDB" id="4V9N">
    <property type="method" value="X-ray"/>
    <property type="resolution" value="3.40 A"/>
    <property type="chains" value="BX/DX=3-94"/>
</dbReference>
<dbReference type="PDB" id="4V9Q">
    <property type="method" value="X-ray"/>
    <property type="resolution" value="3.40 A"/>
    <property type="chains" value="AT/CT=3-94"/>
</dbReference>
<dbReference type="PDB" id="4W29">
    <property type="method" value="X-ray"/>
    <property type="resolution" value="3.80 A"/>
    <property type="chains" value="BX/DX=3-95"/>
</dbReference>
<dbReference type="PDB" id="4XEJ">
    <property type="method" value="X-ray"/>
    <property type="resolution" value="3.80 A"/>
    <property type="chains" value="AL23/BL23=3-94"/>
</dbReference>
<dbReference type="PDB" id="5J4D">
    <property type="method" value="X-ray"/>
    <property type="resolution" value="3.10 A"/>
    <property type="chains" value="U/ZB=1-96"/>
</dbReference>
<dbReference type="PDB" id="5V8I">
    <property type="method" value="X-ray"/>
    <property type="resolution" value="3.25 A"/>
    <property type="chains" value="1X/2X=1-96"/>
</dbReference>
<dbReference type="PDB" id="6B4V">
    <property type="method" value="X-ray"/>
    <property type="resolution" value="3.40 A"/>
    <property type="chains" value="U/YB=1-96"/>
</dbReference>
<dbReference type="PDB" id="6BOH">
    <property type="method" value="X-ray"/>
    <property type="resolution" value="3.40 A"/>
    <property type="chains" value="U/ZB=1-96"/>
</dbReference>
<dbReference type="PDB" id="6BOK">
    <property type="method" value="X-ray"/>
    <property type="resolution" value="3.55 A"/>
    <property type="chains" value="U/XB=1-96"/>
</dbReference>
<dbReference type="PDB" id="6N1D">
    <property type="method" value="X-ray"/>
    <property type="resolution" value="3.20 A"/>
    <property type="chains" value="AL23/BL23=1-96"/>
</dbReference>
<dbReference type="PDBsum" id="4V4I"/>
<dbReference type="PDBsum" id="4V4J"/>
<dbReference type="PDBsum" id="4V63"/>
<dbReference type="PDBsum" id="4V67"/>
<dbReference type="PDBsum" id="4V7P"/>
<dbReference type="PDBsum" id="4V83"/>
<dbReference type="PDBsum" id="4V84"/>
<dbReference type="PDBsum" id="4V9J"/>
<dbReference type="PDBsum" id="4V9K"/>
<dbReference type="PDBsum" id="4V9L"/>
<dbReference type="PDBsum" id="4V9M"/>
<dbReference type="PDBsum" id="4V9N"/>
<dbReference type="PDBsum" id="4V9Q"/>
<dbReference type="PDBsum" id="4W29"/>
<dbReference type="PDBsum" id="4XEJ"/>
<dbReference type="PDBsum" id="5J4D"/>
<dbReference type="PDBsum" id="5V8I"/>
<dbReference type="PDBsum" id="6B4V"/>
<dbReference type="PDBsum" id="6BOH"/>
<dbReference type="PDBsum" id="6BOK"/>
<dbReference type="PDBsum" id="6N1D"/>
<dbReference type="BMRB" id="Q72I06"/>
<dbReference type="SMR" id="Q72I06"/>
<dbReference type="IntAct" id="Q72I06">
    <property type="interactions" value="4"/>
</dbReference>
<dbReference type="GeneID" id="3168722"/>
<dbReference type="KEGG" id="tth:TT_C1326"/>
<dbReference type="eggNOG" id="COG0089">
    <property type="taxonomic scope" value="Bacteria"/>
</dbReference>
<dbReference type="HOGENOM" id="CLU_037562_3_2_0"/>
<dbReference type="OrthoDB" id="9793353at2"/>
<dbReference type="Proteomes" id="UP000000592">
    <property type="component" value="Chromosome"/>
</dbReference>
<dbReference type="GO" id="GO:1990904">
    <property type="term" value="C:ribonucleoprotein complex"/>
    <property type="evidence" value="ECO:0007669"/>
    <property type="project" value="UniProtKB-KW"/>
</dbReference>
<dbReference type="GO" id="GO:0005840">
    <property type="term" value="C:ribosome"/>
    <property type="evidence" value="ECO:0007669"/>
    <property type="project" value="UniProtKB-KW"/>
</dbReference>
<dbReference type="GO" id="GO:0019843">
    <property type="term" value="F:rRNA binding"/>
    <property type="evidence" value="ECO:0007669"/>
    <property type="project" value="UniProtKB-UniRule"/>
</dbReference>
<dbReference type="GO" id="GO:0003735">
    <property type="term" value="F:structural constituent of ribosome"/>
    <property type="evidence" value="ECO:0007669"/>
    <property type="project" value="InterPro"/>
</dbReference>
<dbReference type="GO" id="GO:0006412">
    <property type="term" value="P:translation"/>
    <property type="evidence" value="ECO:0007669"/>
    <property type="project" value="UniProtKB-UniRule"/>
</dbReference>
<dbReference type="FunFam" id="3.30.70.330:FF:000001">
    <property type="entry name" value="50S ribosomal protein L23"/>
    <property type="match status" value="1"/>
</dbReference>
<dbReference type="Gene3D" id="3.30.70.330">
    <property type="match status" value="1"/>
</dbReference>
<dbReference type="HAMAP" id="MF_01369_B">
    <property type="entry name" value="Ribosomal_uL23_B"/>
    <property type="match status" value="1"/>
</dbReference>
<dbReference type="InterPro" id="IPR012677">
    <property type="entry name" value="Nucleotide-bd_a/b_plait_sf"/>
</dbReference>
<dbReference type="InterPro" id="IPR013025">
    <property type="entry name" value="Ribosomal_uL23-like"/>
</dbReference>
<dbReference type="InterPro" id="IPR012678">
    <property type="entry name" value="Ribosomal_uL23/eL15/eS24_sf"/>
</dbReference>
<dbReference type="NCBIfam" id="NF004359">
    <property type="entry name" value="PRK05738.1-3"/>
    <property type="match status" value="1"/>
</dbReference>
<dbReference type="NCBIfam" id="NF004363">
    <property type="entry name" value="PRK05738.2-4"/>
    <property type="match status" value="1"/>
</dbReference>
<dbReference type="NCBIfam" id="NF004366">
    <property type="entry name" value="PRK05738.3-2"/>
    <property type="match status" value="1"/>
</dbReference>
<dbReference type="PANTHER" id="PTHR11620">
    <property type="entry name" value="60S RIBOSOMAL PROTEIN L23A"/>
    <property type="match status" value="1"/>
</dbReference>
<dbReference type="Pfam" id="PF00276">
    <property type="entry name" value="Ribosomal_L23"/>
    <property type="match status" value="1"/>
</dbReference>
<dbReference type="SUPFAM" id="SSF54189">
    <property type="entry name" value="Ribosomal proteins S24e, L23 and L15e"/>
    <property type="match status" value="1"/>
</dbReference>
<keyword id="KW-0002">3D-structure</keyword>
<keyword id="KW-0687">Ribonucleoprotein</keyword>
<keyword id="KW-0689">Ribosomal protein</keyword>
<keyword id="KW-0694">RNA-binding</keyword>
<keyword id="KW-0699">rRNA-binding</keyword>
<evidence type="ECO:0000255" key="1">
    <source>
        <dbReference type="HAMAP-Rule" id="MF_01369"/>
    </source>
</evidence>
<evidence type="ECO:0000305" key="2"/>
<evidence type="ECO:0007829" key="3">
    <source>
        <dbReference type="PDB" id="4V67"/>
    </source>
</evidence>
<evidence type="ECO:0007829" key="4">
    <source>
        <dbReference type="PDB" id="4V9K"/>
    </source>
</evidence>